<proteinExistence type="inferred from homology"/>
<dbReference type="EMBL" id="Y13328">
    <property type="protein sequence ID" value="CAA73766.1"/>
    <property type="molecule type" value="Genomic_DNA"/>
</dbReference>
<dbReference type="RefSeq" id="YP_009555924.1">
    <property type="nucleotide sequence ID" value="NC_040929.1"/>
</dbReference>
<dbReference type="SMR" id="P69675"/>
<dbReference type="GeneID" id="39110576"/>
<dbReference type="GO" id="GO:0009535">
    <property type="term" value="C:chloroplast thylakoid membrane"/>
    <property type="evidence" value="ECO:0007669"/>
    <property type="project" value="UniProtKB-SubCell"/>
</dbReference>
<dbReference type="GO" id="GO:0009539">
    <property type="term" value="C:photosystem II reaction center"/>
    <property type="evidence" value="ECO:0007669"/>
    <property type="project" value="InterPro"/>
</dbReference>
<dbReference type="GO" id="GO:0015979">
    <property type="term" value="P:photosynthesis"/>
    <property type="evidence" value="ECO:0007669"/>
    <property type="project" value="UniProtKB-UniRule"/>
</dbReference>
<dbReference type="HAMAP" id="MF_00808">
    <property type="entry name" value="PSII_PsbT"/>
    <property type="match status" value="1"/>
</dbReference>
<dbReference type="InterPro" id="IPR001743">
    <property type="entry name" value="PSII_PsbT"/>
</dbReference>
<dbReference type="InterPro" id="IPR037268">
    <property type="entry name" value="PSII_PsbT_sf"/>
</dbReference>
<dbReference type="PANTHER" id="PTHR36411">
    <property type="match status" value="1"/>
</dbReference>
<dbReference type="PANTHER" id="PTHR36411:SF2">
    <property type="entry name" value="PHOTOSYSTEM II REACTION CENTER PROTEIN T"/>
    <property type="match status" value="1"/>
</dbReference>
<dbReference type="Pfam" id="PF01405">
    <property type="entry name" value="PsbT"/>
    <property type="match status" value="1"/>
</dbReference>
<dbReference type="SUPFAM" id="SSF161029">
    <property type="entry name" value="Photosystem II reaction center protein T, PsbT"/>
    <property type="match status" value="1"/>
</dbReference>
<feature type="chain" id="PRO_0000217971" description="Photosystem II reaction center protein T">
    <location>
        <begin position="1"/>
        <end position="35"/>
    </location>
</feature>
<feature type="transmembrane region" description="Helical" evidence="1">
    <location>
        <begin position="3"/>
        <end position="23"/>
    </location>
</feature>
<organism>
    <name type="scientific">Populus deltoides</name>
    <name type="common">Eastern poplar</name>
    <name type="synonym">Eastern cottonwood</name>
    <dbReference type="NCBI Taxonomy" id="3696"/>
    <lineage>
        <taxon>Eukaryota</taxon>
        <taxon>Viridiplantae</taxon>
        <taxon>Streptophyta</taxon>
        <taxon>Embryophyta</taxon>
        <taxon>Tracheophyta</taxon>
        <taxon>Spermatophyta</taxon>
        <taxon>Magnoliopsida</taxon>
        <taxon>eudicotyledons</taxon>
        <taxon>Gunneridae</taxon>
        <taxon>Pentapetalae</taxon>
        <taxon>rosids</taxon>
        <taxon>fabids</taxon>
        <taxon>Malpighiales</taxon>
        <taxon>Salicaceae</taxon>
        <taxon>Saliceae</taxon>
        <taxon>Populus</taxon>
    </lineage>
</organism>
<protein>
    <recommendedName>
        <fullName evidence="1">Photosystem II reaction center protein T</fullName>
        <shortName evidence="1">PSII-T</shortName>
    </recommendedName>
</protein>
<name>PSBT_POPDE</name>
<reference key="1">
    <citation type="journal article" date="1999" name="Curr. Genet.">
        <title>Organization and post-transcriptional processing of the psb B operon from chloroplasts of Populus deltoides.</title>
        <authorList>
            <person name="Dixit R."/>
            <person name="Trivedi P.K."/>
            <person name="Nath P."/>
            <person name="Sane P.V."/>
        </authorList>
    </citation>
    <scope>NUCLEOTIDE SEQUENCE [GENOMIC DNA]</scope>
    <source>
        <strain>cv. Stoneville D121</strain>
        <tissue>Leaf</tissue>
    </source>
</reference>
<geneLocation type="chloroplast"/>
<gene>
    <name evidence="1" type="primary">psbT</name>
    <name type="synonym">ycf8</name>
</gene>
<keyword id="KW-0150">Chloroplast</keyword>
<keyword id="KW-0472">Membrane</keyword>
<keyword id="KW-0602">Photosynthesis</keyword>
<keyword id="KW-0604">Photosystem II</keyword>
<keyword id="KW-0934">Plastid</keyword>
<keyword id="KW-0793">Thylakoid</keyword>
<keyword id="KW-0812">Transmembrane</keyword>
<keyword id="KW-1133">Transmembrane helix</keyword>
<comment type="function">
    <text evidence="1">Found at the monomer-monomer interface of the photosystem II (PS II) dimer, plays a role in assembly and dimerization of PSII. PSII is a light-driven water plastoquinone oxidoreductase, using light energy to abstract electrons from H(2)O, generating a proton gradient subsequently used for ATP formation.</text>
</comment>
<comment type="subunit">
    <text evidence="1">PSII is composed of 1 copy each of membrane proteins PsbA, PsbB, PsbC, PsbD, PsbE, PsbF, PsbH, PsbI, PsbJ, PsbK, PsbL, PsbM, PsbT, PsbY, PsbZ, Psb30/Ycf12, at least 3 peripheral proteins of the oxygen-evolving complex and a large number of cofactors. It forms dimeric complexes.</text>
</comment>
<comment type="subcellular location">
    <subcellularLocation>
        <location evidence="1">Plastid</location>
        <location evidence="1">Chloroplast thylakoid membrane</location>
        <topology evidence="1">Single-pass membrane protein</topology>
    </subcellularLocation>
</comment>
<comment type="similarity">
    <text evidence="1">Belongs to the PsbT family.</text>
</comment>
<evidence type="ECO:0000255" key="1">
    <source>
        <dbReference type="HAMAP-Rule" id="MF_00808"/>
    </source>
</evidence>
<sequence>MEALVYTFLLVSTLGIIFFAIFFREPPKVPTKKVK</sequence>
<accession>P69675</accession>
<accession>P12183</accession>